<sequence length="325" mass="34168">MATVKKVLPRRLVGLATLRAVSTSSVGTFPKQVKIVEVGPRDGLQNEKNIVPTPVKIKLIDMLSEAGLPVVEATSFVSPKWVPQMADHAEVLKGIQKFPGVNYPVLTPNFKGFQAAVAAGAKEVAIFGAASELFTKKNINCSIDESLQRFDEILKAARAAGISVRGYVSCVLGCPYEGKISPAKVAEVTKKLYSMGCYEISLGDTIGVGTPGAMKDMLSAVLQEVPVTALAVHCHDTYGQALANTLTALQMGVSVMDSSVAGLGGCPYAQGASGNLATEDLVYMLAGLGIHTGVNLQKLLEAGAFICQALNRRTNSKVAQATCKL</sequence>
<protein>
    <recommendedName>
        <fullName>Hydroxymethylglutaryl-CoA lyase, mitochondrial</fullName>
        <shortName>HL</shortName>
        <shortName>HMG-CoA lyase</shortName>
        <ecNumber evidence="2">4.1.3.4</ecNumber>
    </recommendedName>
    <alternativeName>
        <fullName>3-hydroxy-3-methylglutarate-CoA lyase</fullName>
    </alternativeName>
</protein>
<reference key="1">
    <citation type="submission" date="2006-06" db="EMBL/GenBank/DDBJ databases">
        <authorList>
            <consortium name="NIH - Mammalian Gene Collection (MGC) project"/>
        </authorList>
    </citation>
    <scope>NUCLEOTIDE SEQUENCE [LARGE SCALE MRNA]</scope>
    <source>
        <strain>Hereford</strain>
        <tissue>Brain cortex</tissue>
    </source>
</reference>
<reference key="2">
    <citation type="submission" date="1995-11" db="EMBL/GenBank/DDBJ databases">
        <authorList>
            <person name="Ji S."/>
            <person name="Kuske J."/>
            <person name="Spurlock M.E."/>
        </authorList>
    </citation>
    <scope>NUCLEOTIDE SEQUENCE [MRNA] OF 186-325</scope>
</reference>
<dbReference type="EC" id="4.1.3.4" evidence="2"/>
<dbReference type="EMBL" id="BC118276">
    <property type="protein sequence ID" value="AAI18277.1"/>
    <property type="molecule type" value="mRNA"/>
</dbReference>
<dbReference type="EMBL" id="U41409">
    <property type="protein sequence ID" value="AAA86757.1"/>
    <property type="molecule type" value="mRNA"/>
</dbReference>
<dbReference type="RefSeq" id="NP_001068600.1">
    <property type="nucleotide sequence ID" value="NM_001075132.1"/>
</dbReference>
<dbReference type="SMR" id="Q29448"/>
<dbReference type="FunCoup" id="Q29448">
    <property type="interactions" value="1985"/>
</dbReference>
<dbReference type="STRING" id="9913.ENSBTAP00000029103"/>
<dbReference type="PaxDb" id="9913-ENSBTAP00000029103"/>
<dbReference type="PeptideAtlas" id="Q29448"/>
<dbReference type="Ensembl" id="ENSBTAT00000029103.5">
    <property type="protein sequence ID" value="ENSBTAP00000029103.3"/>
    <property type="gene ID" value="ENSBTAG00000021832.5"/>
</dbReference>
<dbReference type="GeneID" id="317658"/>
<dbReference type="KEGG" id="bta:317658"/>
<dbReference type="CTD" id="3155"/>
<dbReference type="VEuPathDB" id="HostDB:ENSBTAG00000021832"/>
<dbReference type="VGNC" id="VGNC:29877">
    <property type="gene designation" value="HMGCL"/>
</dbReference>
<dbReference type="eggNOG" id="KOG2368">
    <property type="taxonomic scope" value="Eukaryota"/>
</dbReference>
<dbReference type="GeneTree" id="ENSGT00940000158484"/>
<dbReference type="HOGENOM" id="CLU_022138_3_2_1"/>
<dbReference type="InParanoid" id="Q29448"/>
<dbReference type="OMA" id="FQMRNTH"/>
<dbReference type="OrthoDB" id="1905920at2759"/>
<dbReference type="TreeFam" id="TF105363"/>
<dbReference type="Reactome" id="R-BTA-77111">
    <property type="pathway name" value="Synthesis of Ketone Bodies"/>
</dbReference>
<dbReference type="Reactome" id="R-BTA-9033241">
    <property type="pathway name" value="Peroxisomal protein import"/>
</dbReference>
<dbReference type="UniPathway" id="UPA00896">
    <property type="reaction ID" value="UER00863"/>
</dbReference>
<dbReference type="Proteomes" id="UP000009136">
    <property type="component" value="Chromosome 2"/>
</dbReference>
<dbReference type="Bgee" id="ENSBTAG00000021832">
    <property type="expression patterns" value="Expressed in digestive system secreted substance and 105 other cell types or tissues"/>
</dbReference>
<dbReference type="GO" id="GO:0005759">
    <property type="term" value="C:mitochondrial matrix"/>
    <property type="evidence" value="ECO:0007669"/>
    <property type="project" value="UniProtKB-SubCell"/>
</dbReference>
<dbReference type="GO" id="GO:0005739">
    <property type="term" value="C:mitochondrion"/>
    <property type="evidence" value="ECO:0000318"/>
    <property type="project" value="GO_Central"/>
</dbReference>
<dbReference type="GO" id="GO:0005777">
    <property type="term" value="C:peroxisome"/>
    <property type="evidence" value="ECO:0007669"/>
    <property type="project" value="UniProtKB-SubCell"/>
</dbReference>
<dbReference type="GO" id="GO:0032991">
    <property type="term" value="C:protein-containing complex"/>
    <property type="evidence" value="ECO:0007669"/>
    <property type="project" value="Ensembl"/>
</dbReference>
<dbReference type="GO" id="GO:0004419">
    <property type="term" value="F:hydroxymethylglutaryl-CoA lyase activity"/>
    <property type="evidence" value="ECO:0000250"/>
    <property type="project" value="UniProtKB"/>
</dbReference>
<dbReference type="GO" id="GO:0000287">
    <property type="term" value="F:magnesium ion binding"/>
    <property type="evidence" value="ECO:0007669"/>
    <property type="project" value="Ensembl"/>
</dbReference>
<dbReference type="GO" id="GO:0030145">
    <property type="term" value="F:manganese ion binding"/>
    <property type="evidence" value="ECO:0007669"/>
    <property type="project" value="Ensembl"/>
</dbReference>
<dbReference type="GO" id="GO:0046872">
    <property type="term" value="F:metal ion binding"/>
    <property type="evidence" value="ECO:0000250"/>
    <property type="project" value="UniProtKB"/>
</dbReference>
<dbReference type="GO" id="GO:0005198">
    <property type="term" value="F:structural molecule activity"/>
    <property type="evidence" value="ECO:0007669"/>
    <property type="project" value="Ensembl"/>
</dbReference>
<dbReference type="GO" id="GO:0046951">
    <property type="term" value="P:ketone body biosynthetic process"/>
    <property type="evidence" value="ECO:0000250"/>
    <property type="project" value="UniProtKB"/>
</dbReference>
<dbReference type="GO" id="GO:0006552">
    <property type="term" value="P:L-leucine catabolic process"/>
    <property type="evidence" value="ECO:0000318"/>
    <property type="project" value="GO_Central"/>
</dbReference>
<dbReference type="GO" id="GO:0007005">
    <property type="term" value="P:mitochondrion organization"/>
    <property type="evidence" value="ECO:0007669"/>
    <property type="project" value="Ensembl"/>
</dbReference>
<dbReference type="CDD" id="cd07938">
    <property type="entry name" value="DRE_TIM_HMGL"/>
    <property type="match status" value="1"/>
</dbReference>
<dbReference type="FunFam" id="3.20.20.70:FF:000038">
    <property type="entry name" value="Hydroxymethylglutaryl-CoA lyase, mitochondrial"/>
    <property type="match status" value="1"/>
</dbReference>
<dbReference type="Gene3D" id="3.20.20.70">
    <property type="entry name" value="Aldolase class I"/>
    <property type="match status" value="1"/>
</dbReference>
<dbReference type="InterPro" id="IPR013785">
    <property type="entry name" value="Aldolase_TIM"/>
</dbReference>
<dbReference type="InterPro" id="IPR000138">
    <property type="entry name" value="HMG_CoA_lyase_AS"/>
</dbReference>
<dbReference type="InterPro" id="IPR043594">
    <property type="entry name" value="HMGL"/>
</dbReference>
<dbReference type="InterPro" id="IPR000891">
    <property type="entry name" value="PYR_CT"/>
</dbReference>
<dbReference type="NCBIfam" id="NF004283">
    <property type="entry name" value="PRK05692.1"/>
    <property type="match status" value="1"/>
</dbReference>
<dbReference type="PANTHER" id="PTHR42738">
    <property type="entry name" value="HYDROXYMETHYLGLUTARYL-COA LYASE"/>
    <property type="match status" value="1"/>
</dbReference>
<dbReference type="PANTHER" id="PTHR42738:SF1">
    <property type="entry name" value="HYDROXYMETHYLGLUTARYL-COA LYASE, MITOCHONDRIAL"/>
    <property type="match status" value="1"/>
</dbReference>
<dbReference type="Pfam" id="PF00682">
    <property type="entry name" value="HMGL-like"/>
    <property type="match status" value="1"/>
</dbReference>
<dbReference type="SUPFAM" id="SSF51569">
    <property type="entry name" value="Aldolase"/>
    <property type="match status" value="1"/>
</dbReference>
<dbReference type="PROSITE" id="PS01062">
    <property type="entry name" value="HMG_COA_LYASE"/>
    <property type="match status" value="1"/>
</dbReference>
<dbReference type="PROSITE" id="PS50991">
    <property type="entry name" value="PYR_CT"/>
    <property type="match status" value="1"/>
</dbReference>
<keyword id="KW-0007">Acetylation</keyword>
<keyword id="KW-1015">Disulfide bond</keyword>
<keyword id="KW-0443">Lipid metabolism</keyword>
<keyword id="KW-0456">Lyase</keyword>
<keyword id="KW-0479">Metal-binding</keyword>
<keyword id="KW-0496">Mitochondrion</keyword>
<keyword id="KW-0576">Peroxisome</keyword>
<keyword id="KW-1185">Reference proteome</keyword>
<keyword id="KW-0809">Transit peptide</keyword>
<gene>
    <name type="primary">HMGCL</name>
</gene>
<accession>Q29448</accession>
<accession>Q148J2</accession>
<proteinExistence type="evidence at transcript level"/>
<organism>
    <name type="scientific">Bos taurus</name>
    <name type="common">Bovine</name>
    <dbReference type="NCBI Taxonomy" id="9913"/>
    <lineage>
        <taxon>Eukaryota</taxon>
        <taxon>Metazoa</taxon>
        <taxon>Chordata</taxon>
        <taxon>Craniata</taxon>
        <taxon>Vertebrata</taxon>
        <taxon>Euteleostomi</taxon>
        <taxon>Mammalia</taxon>
        <taxon>Eutheria</taxon>
        <taxon>Laurasiatheria</taxon>
        <taxon>Artiodactyla</taxon>
        <taxon>Ruminantia</taxon>
        <taxon>Pecora</taxon>
        <taxon>Bovidae</taxon>
        <taxon>Bovinae</taxon>
        <taxon>Bos</taxon>
    </lineage>
</organism>
<feature type="transit peptide" description="Mitochondrion" evidence="1">
    <location>
        <begin position="1"/>
        <end position="27"/>
    </location>
</feature>
<feature type="chain" id="PRO_0000151519" description="Hydroxymethylglutaryl-CoA lyase, mitochondrial">
    <location>
        <begin position="28"/>
        <end position="325"/>
    </location>
</feature>
<feature type="domain" description="Pyruvate carboxyltransferase" evidence="5">
    <location>
        <begin position="33"/>
        <end position="300"/>
    </location>
</feature>
<feature type="short sequence motif" description="Microbody targeting signal" evidence="4">
    <location>
        <begin position="323"/>
        <end position="325"/>
    </location>
</feature>
<feature type="active site" evidence="6">
    <location>
        <position position="266"/>
    </location>
</feature>
<feature type="binding site" evidence="1">
    <location>
        <position position="41"/>
    </location>
    <ligand>
        <name>substrate</name>
    </ligand>
</feature>
<feature type="binding site" evidence="1">
    <location>
        <position position="42"/>
    </location>
    <ligand>
        <name>a divalent metal cation</name>
        <dbReference type="ChEBI" id="CHEBI:60240"/>
    </ligand>
</feature>
<feature type="binding site" evidence="1">
    <location>
        <position position="233"/>
    </location>
    <ligand>
        <name>a divalent metal cation</name>
        <dbReference type="ChEBI" id="CHEBI:60240"/>
    </ligand>
</feature>
<feature type="binding site" evidence="1">
    <location>
        <position position="235"/>
    </location>
    <ligand>
        <name>a divalent metal cation</name>
        <dbReference type="ChEBI" id="CHEBI:60240"/>
    </ligand>
</feature>
<feature type="binding site" evidence="1">
    <location>
        <position position="275"/>
    </location>
    <ligand>
        <name>a divalent metal cation</name>
        <dbReference type="ChEBI" id="CHEBI:60240"/>
    </ligand>
</feature>
<feature type="modified residue" description="N6-acetyllysine; alternate" evidence="2">
    <location>
        <position position="48"/>
    </location>
</feature>
<feature type="modified residue" description="N6-succinyllysine; alternate" evidence="3">
    <location>
        <position position="48"/>
    </location>
</feature>
<feature type="modified residue" description="N6-acetyllysine" evidence="3">
    <location>
        <position position="111"/>
    </location>
</feature>
<feature type="modified residue" description="N6-acetyllysine; alternate" evidence="3">
    <location>
        <position position="137"/>
    </location>
</feature>
<feature type="modified residue" description="N6-succinyllysine; alternate" evidence="3">
    <location>
        <position position="137"/>
    </location>
</feature>
<feature type="modified residue" description="N6-acetyllysine; alternate" evidence="3">
    <location>
        <position position="179"/>
    </location>
</feature>
<feature type="modified residue" description="N6-succinyllysine; alternate" evidence="3">
    <location>
        <position position="179"/>
    </location>
</feature>
<feature type="modified residue" description="N6-acetyllysine" evidence="3">
    <location>
        <position position="324"/>
    </location>
</feature>
<feature type="disulfide bond" description="Interchain" evidence="1">
    <location>
        <position position="323"/>
    </location>
</feature>
<feature type="sequence conflict" description="In Ref. 2; AAA86757." evidence="7" ref="2">
    <original>V</original>
    <variation>A</variation>
    <location>
        <position position="221"/>
    </location>
</feature>
<comment type="function">
    <text evidence="2">Mitochondrial 3-hydroxy-3-methylglutaryl-CoA lyase that catalyzes a cation-dependent cleavage of (S)-3-hydroxy-3-methylglutaryl-CoA into acetyl-CoA and acetoacetate, a key step in ketogenesis. Terminal step in leucine catabolism. Ketone bodies (beta-hydroxybutyrate, acetoacetate and acetone) are essential as an alternative source of energy to glucose, as lipid precursors and as regulators of metabolism.</text>
</comment>
<comment type="catalytic activity">
    <reaction evidence="2">
        <text>(3S)-3-hydroxy-3-methylglutaryl-CoA = acetoacetate + acetyl-CoA</text>
        <dbReference type="Rhea" id="RHEA:24404"/>
        <dbReference type="ChEBI" id="CHEBI:13705"/>
        <dbReference type="ChEBI" id="CHEBI:43074"/>
        <dbReference type="ChEBI" id="CHEBI:57288"/>
        <dbReference type="EC" id="4.1.3.4"/>
    </reaction>
</comment>
<comment type="pathway">
    <text>Metabolic intermediate metabolism; (S)-3-hydroxy-3-methylglutaryl-CoA degradation; acetoacetate from (S)-3-hydroxy-3-methylglutaryl-CoA: step 1/1.</text>
</comment>
<comment type="subunit">
    <text evidence="2">Homodimer; disulfide-linked. Can also form homotetramers.</text>
</comment>
<comment type="subcellular location">
    <subcellularLocation>
        <location evidence="3">Mitochondrion matrix</location>
    </subcellularLocation>
    <subcellularLocation>
        <location evidence="3">Peroxisome</location>
    </subcellularLocation>
    <text evidence="3">Unprocessed form is peroxisomal.</text>
</comment>
<comment type="similarity">
    <text evidence="7">Belongs to the HMG-CoA lyase family.</text>
</comment>
<evidence type="ECO:0000250" key="1"/>
<evidence type="ECO:0000250" key="2">
    <source>
        <dbReference type="UniProtKB" id="P35914"/>
    </source>
</evidence>
<evidence type="ECO:0000250" key="3">
    <source>
        <dbReference type="UniProtKB" id="P38060"/>
    </source>
</evidence>
<evidence type="ECO:0000255" key="4"/>
<evidence type="ECO:0000255" key="5">
    <source>
        <dbReference type="PROSITE-ProRule" id="PRU01151"/>
    </source>
</evidence>
<evidence type="ECO:0000255" key="6">
    <source>
        <dbReference type="PROSITE-ProRule" id="PRU10115"/>
    </source>
</evidence>
<evidence type="ECO:0000305" key="7"/>
<name>HMGCL_BOVIN</name>